<dbReference type="EMBL" id="CP000038">
    <property type="protein sequence ID" value="AAZ90577.1"/>
    <property type="molecule type" value="Genomic_DNA"/>
</dbReference>
<dbReference type="RefSeq" id="WP_000027708.1">
    <property type="nucleotide sequence ID" value="NC_007384.1"/>
</dbReference>
<dbReference type="SMR" id="Q3YV85"/>
<dbReference type="GeneID" id="93778047"/>
<dbReference type="KEGG" id="ssn:SSON_4060"/>
<dbReference type="HOGENOM" id="CLU_055275_0_0_6"/>
<dbReference type="Proteomes" id="UP000002529">
    <property type="component" value="Chromosome"/>
</dbReference>
<dbReference type="GO" id="GO:0005829">
    <property type="term" value="C:cytosol"/>
    <property type="evidence" value="ECO:0007669"/>
    <property type="project" value="TreeGrafter"/>
</dbReference>
<dbReference type="GO" id="GO:0008199">
    <property type="term" value="F:ferric iron binding"/>
    <property type="evidence" value="ECO:0007669"/>
    <property type="project" value="TreeGrafter"/>
</dbReference>
<dbReference type="GO" id="GO:0051604">
    <property type="term" value="P:protein maturation"/>
    <property type="evidence" value="ECO:0007669"/>
    <property type="project" value="TreeGrafter"/>
</dbReference>
<dbReference type="CDD" id="cd16341">
    <property type="entry name" value="FdhE"/>
    <property type="match status" value="1"/>
</dbReference>
<dbReference type="FunFam" id="3.90.1670.10:FF:000001">
    <property type="entry name" value="Protein FdhE"/>
    <property type="match status" value="1"/>
</dbReference>
<dbReference type="Gene3D" id="3.90.1670.10">
    <property type="entry name" value="FdhE-like domain"/>
    <property type="match status" value="1"/>
</dbReference>
<dbReference type="HAMAP" id="MF_00611">
    <property type="entry name" value="FdeH"/>
    <property type="match status" value="1"/>
</dbReference>
<dbReference type="InterPro" id="IPR024064">
    <property type="entry name" value="FdhE-like_sf"/>
</dbReference>
<dbReference type="InterPro" id="IPR056796">
    <property type="entry name" value="FdhE_C"/>
</dbReference>
<dbReference type="InterPro" id="IPR056797">
    <property type="entry name" value="FdhE_central"/>
</dbReference>
<dbReference type="InterPro" id="IPR056774">
    <property type="entry name" value="FdhE_N"/>
</dbReference>
<dbReference type="InterPro" id="IPR006452">
    <property type="entry name" value="Formate_DH_accessory"/>
</dbReference>
<dbReference type="NCBIfam" id="TIGR01562">
    <property type="entry name" value="FdhE"/>
    <property type="match status" value="1"/>
</dbReference>
<dbReference type="NCBIfam" id="NF002925">
    <property type="entry name" value="PRK03564.1"/>
    <property type="match status" value="1"/>
</dbReference>
<dbReference type="PANTHER" id="PTHR37689">
    <property type="entry name" value="PROTEIN FDHE"/>
    <property type="match status" value="1"/>
</dbReference>
<dbReference type="PANTHER" id="PTHR37689:SF1">
    <property type="entry name" value="PROTEIN FDHE"/>
    <property type="match status" value="1"/>
</dbReference>
<dbReference type="Pfam" id="PF24860">
    <property type="entry name" value="FdhE_C"/>
    <property type="match status" value="1"/>
</dbReference>
<dbReference type="Pfam" id="PF24859">
    <property type="entry name" value="FdhE_central"/>
    <property type="match status" value="1"/>
</dbReference>
<dbReference type="Pfam" id="PF04216">
    <property type="entry name" value="FdhE_N"/>
    <property type="match status" value="1"/>
</dbReference>
<dbReference type="PIRSF" id="PIRSF018296">
    <property type="entry name" value="Format_dh_formtn"/>
    <property type="match status" value="1"/>
</dbReference>
<dbReference type="SUPFAM" id="SSF144020">
    <property type="entry name" value="FdhE-like"/>
    <property type="match status" value="1"/>
</dbReference>
<comment type="function">
    <text evidence="1">Necessary for formate dehydrogenase activity.</text>
</comment>
<comment type="subcellular location">
    <subcellularLocation>
        <location evidence="1">Cytoplasm</location>
    </subcellularLocation>
</comment>
<comment type="similarity">
    <text evidence="1">Belongs to the FdhE family.</text>
</comment>
<organism>
    <name type="scientific">Shigella sonnei (strain Ss046)</name>
    <dbReference type="NCBI Taxonomy" id="300269"/>
    <lineage>
        <taxon>Bacteria</taxon>
        <taxon>Pseudomonadati</taxon>
        <taxon>Pseudomonadota</taxon>
        <taxon>Gammaproteobacteria</taxon>
        <taxon>Enterobacterales</taxon>
        <taxon>Enterobacteriaceae</taxon>
        <taxon>Shigella</taxon>
    </lineage>
</organism>
<accession>Q3YV85</accession>
<name>FDHE_SHISS</name>
<keyword id="KW-0963">Cytoplasm</keyword>
<keyword id="KW-1185">Reference proteome</keyword>
<evidence type="ECO:0000255" key="1">
    <source>
        <dbReference type="HAMAP-Rule" id="MF_00611"/>
    </source>
</evidence>
<protein>
    <recommendedName>
        <fullName evidence="1">Protein FdhE</fullName>
    </recommendedName>
</protein>
<sequence length="309" mass="34689">MSIRIIPQDELGSSEKRTADMIPPLLFPRLKNLYNRRAERLRELAENNPLGDYLRFAALIAHAQEVVLYDHPLEMDLTARIKEASAQGKPPLDIHVLPRDKHWQKLLMALIAELKPEMSGPALAVIENLEKASTQELEDMASALFASDFSSVSSDKAPFIWAALSLYWAQMANLIPGKARAEYGEQRQYCPVCGSMPVSSMVQIGTTQGLRYLHCNLCETEWHVVRVKCSNCEQSGKLHYWSLDDEQAAIKAESCDDCGTYLKILYQEKEPKVEAVADDLASLVLDARMEQEGYARSSINPFLFPGEGE</sequence>
<feature type="chain" id="PRO_1000056717" description="Protein FdhE">
    <location>
        <begin position="1"/>
        <end position="309"/>
    </location>
</feature>
<gene>
    <name evidence="1" type="primary">fdhE</name>
    <name type="ordered locus">SSON_4060</name>
</gene>
<proteinExistence type="inferred from homology"/>
<reference key="1">
    <citation type="journal article" date="2005" name="Nucleic Acids Res.">
        <title>Genome dynamics and diversity of Shigella species, the etiologic agents of bacillary dysentery.</title>
        <authorList>
            <person name="Yang F."/>
            <person name="Yang J."/>
            <person name="Zhang X."/>
            <person name="Chen L."/>
            <person name="Jiang Y."/>
            <person name="Yan Y."/>
            <person name="Tang X."/>
            <person name="Wang J."/>
            <person name="Xiong Z."/>
            <person name="Dong J."/>
            <person name="Xue Y."/>
            <person name="Zhu Y."/>
            <person name="Xu X."/>
            <person name="Sun L."/>
            <person name="Chen S."/>
            <person name="Nie H."/>
            <person name="Peng J."/>
            <person name="Xu J."/>
            <person name="Wang Y."/>
            <person name="Yuan Z."/>
            <person name="Wen Y."/>
            <person name="Yao Z."/>
            <person name="Shen Y."/>
            <person name="Qiang B."/>
            <person name="Hou Y."/>
            <person name="Yu J."/>
            <person name="Jin Q."/>
        </authorList>
    </citation>
    <scope>NUCLEOTIDE SEQUENCE [LARGE SCALE GENOMIC DNA]</scope>
    <source>
        <strain>Ss046</strain>
    </source>
</reference>